<protein>
    <recommendedName>
        <fullName evidence="1">Anamorsin homolog</fullName>
    </recommendedName>
    <alternativeName>
        <fullName evidence="1">Fe-S cluster assembly protein DRE2 homolog</fullName>
    </alternativeName>
</protein>
<evidence type="ECO:0000255" key="1">
    <source>
        <dbReference type="HAMAP-Rule" id="MF_03115"/>
    </source>
</evidence>
<feature type="chain" id="PRO_0000392371" description="Anamorsin homolog">
    <location>
        <begin position="1"/>
        <end position="277"/>
    </location>
</feature>
<feature type="region of interest" description="N-terminal SAM-like domain" evidence="1">
    <location>
        <begin position="1"/>
        <end position="134"/>
    </location>
</feature>
<feature type="region of interest" description="Linker" evidence="1">
    <location>
        <begin position="135"/>
        <end position="191"/>
    </location>
</feature>
<feature type="region of interest" description="Fe-S binding site A" evidence="1">
    <location>
        <begin position="199"/>
        <end position="215"/>
    </location>
</feature>
<feature type="region of interest" description="Fe-S binding site B" evidence="1">
    <location>
        <begin position="238"/>
        <end position="252"/>
    </location>
</feature>
<feature type="short sequence motif" description="Cx2C motif 1" evidence="1">
    <location>
        <begin position="238"/>
        <end position="241"/>
    </location>
</feature>
<feature type="short sequence motif" description="Cx2C motif 2" evidence="1">
    <location>
        <begin position="249"/>
        <end position="252"/>
    </location>
</feature>
<feature type="binding site" evidence="1">
    <location>
        <position position="199"/>
    </location>
    <ligand>
        <name>[2Fe-2S] cluster</name>
        <dbReference type="ChEBI" id="CHEBI:190135"/>
    </ligand>
</feature>
<feature type="binding site" evidence="1">
    <location>
        <position position="210"/>
    </location>
    <ligand>
        <name>[2Fe-2S] cluster</name>
        <dbReference type="ChEBI" id="CHEBI:190135"/>
    </ligand>
</feature>
<feature type="binding site" evidence="1">
    <location>
        <position position="213"/>
    </location>
    <ligand>
        <name>[2Fe-2S] cluster</name>
        <dbReference type="ChEBI" id="CHEBI:190135"/>
    </ligand>
</feature>
<feature type="binding site" evidence="1">
    <location>
        <position position="215"/>
    </location>
    <ligand>
        <name>[2Fe-2S] cluster</name>
        <dbReference type="ChEBI" id="CHEBI:190135"/>
    </ligand>
</feature>
<feature type="binding site" evidence="1">
    <location>
        <position position="238"/>
    </location>
    <ligand>
        <name>[4Fe-4S] cluster</name>
        <dbReference type="ChEBI" id="CHEBI:49883"/>
    </ligand>
</feature>
<feature type="binding site" evidence="1">
    <location>
        <position position="241"/>
    </location>
    <ligand>
        <name>[4Fe-4S] cluster</name>
        <dbReference type="ChEBI" id="CHEBI:49883"/>
    </ligand>
</feature>
<feature type="binding site" evidence="1">
    <location>
        <position position="249"/>
    </location>
    <ligand>
        <name>[4Fe-4S] cluster</name>
        <dbReference type="ChEBI" id="CHEBI:49883"/>
    </ligand>
</feature>
<feature type="binding site" evidence="1">
    <location>
        <position position="252"/>
    </location>
    <ligand>
        <name>[4Fe-4S] cluster</name>
        <dbReference type="ChEBI" id="CHEBI:49883"/>
    </ligand>
</feature>
<sequence length="277" mass="29487">MALQGNVAILTRLQDTASAVQQFKQTNPQVADVTVLAVAEDSDVTQTVTSSSASAKENAFDGIVSFSEQTEELGIELGAVLPLLKTGGVLQLHVANVKEEKKNAILMALMIGGLVDTSDKQESSPFYPEFSDAVSFTSKKQSFESAAIPLAVKSTTTQPIKKWTVLADDFGDDQDDDIIDEDTLLDDTDEVLQAAKADCGDAVGGKKRACKNCTCGLKDENDKPVMSEKDLNSLVSGCGNCFKGDAFRCGSCPFLGKPAFKPGMEKVLLNLDSSDDI</sequence>
<keyword id="KW-0001">2Fe-2S</keyword>
<keyword id="KW-0004">4Fe-4S</keyword>
<keyword id="KW-0963">Cytoplasm</keyword>
<keyword id="KW-0408">Iron</keyword>
<keyword id="KW-0411">Iron-sulfur</keyword>
<keyword id="KW-0479">Metal-binding</keyword>
<keyword id="KW-0496">Mitochondrion</keyword>
<keyword id="KW-1185">Reference proteome</keyword>
<name>DRE2_PHYIT</name>
<proteinExistence type="inferred from homology"/>
<reference key="1">
    <citation type="journal article" date="2009" name="Nature">
        <title>Genome sequence and analysis of the Irish potato famine pathogen Phytophthora infestans.</title>
        <authorList>
            <consortium name="The Broad Institute Genome Sequencing Platform"/>
            <person name="Haas B.J."/>
            <person name="Kamoun S."/>
            <person name="Zody M.C."/>
            <person name="Jiang R.H."/>
            <person name="Handsaker R.E."/>
            <person name="Cano L.M."/>
            <person name="Grabherr M."/>
            <person name="Kodira C.D."/>
            <person name="Raffaele S."/>
            <person name="Torto-Alalibo T."/>
            <person name="Bozkurt T.O."/>
            <person name="Ah-Fong A.M."/>
            <person name="Alvarado L."/>
            <person name="Anderson V.L."/>
            <person name="Armstrong M.R."/>
            <person name="Avrova A."/>
            <person name="Baxter L."/>
            <person name="Beynon J."/>
            <person name="Boevink P.C."/>
            <person name="Bollmann S.R."/>
            <person name="Bos J.I."/>
            <person name="Bulone V."/>
            <person name="Cai G."/>
            <person name="Cakir C."/>
            <person name="Carrington J.C."/>
            <person name="Chawner M."/>
            <person name="Conti L."/>
            <person name="Costanzo S."/>
            <person name="Ewan R."/>
            <person name="Fahlgren N."/>
            <person name="Fischbach M.A."/>
            <person name="Fugelstad J."/>
            <person name="Gilroy E.M."/>
            <person name="Gnerre S."/>
            <person name="Green P.J."/>
            <person name="Grenville-Briggs L.J."/>
            <person name="Griffith J."/>
            <person name="Grunwald N.J."/>
            <person name="Horn K."/>
            <person name="Horner N.R."/>
            <person name="Hu C.H."/>
            <person name="Huitema E."/>
            <person name="Jeong D.H."/>
            <person name="Jones A.M."/>
            <person name="Jones J.D."/>
            <person name="Jones R.W."/>
            <person name="Karlsson E.K."/>
            <person name="Kunjeti S.G."/>
            <person name="Lamour K."/>
            <person name="Liu Z."/>
            <person name="Ma L."/>
            <person name="Maclean D."/>
            <person name="Chibucos M.C."/>
            <person name="McDonald H."/>
            <person name="McWalters J."/>
            <person name="Meijer H.J."/>
            <person name="Morgan W."/>
            <person name="Morris P.F."/>
            <person name="Munro C.A."/>
            <person name="O'Neill K."/>
            <person name="Ospina-Giraldo M."/>
            <person name="Pinzon A."/>
            <person name="Pritchard L."/>
            <person name="Ramsahoye B."/>
            <person name="Ren Q."/>
            <person name="Restrepo S."/>
            <person name="Roy S."/>
            <person name="Sadanandom A."/>
            <person name="Savidor A."/>
            <person name="Schornack S."/>
            <person name="Schwartz D.C."/>
            <person name="Schumann U.D."/>
            <person name="Schwessinger B."/>
            <person name="Seyer L."/>
            <person name="Sharpe T."/>
            <person name="Silvar C."/>
            <person name="Song J."/>
            <person name="Studholme D.J."/>
            <person name="Sykes S."/>
            <person name="Thines M."/>
            <person name="van de Vondervoort P.J."/>
            <person name="Phuntumart V."/>
            <person name="Wawra S."/>
            <person name="Weide R."/>
            <person name="Win J."/>
            <person name="Young C."/>
            <person name="Zhou S."/>
            <person name="Fry W."/>
            <person name="Meyers B.C."/>
            <person name="van West P."/>
            <person name="Ristaino J."/>
            <person name="Govers F."/>
            <person name="Birch P.R."/>
            <person name="Whisson S.C."/>
            <person name="Judelson H.S."/>
            <person name="Nusbaum C."/>
        </authorList>
    </citation>
    <scope>NUCLEOTIDE SEQUENCE [LARGE SCALE GENOMIC DNA]</scope>
    <source>
        <strain>T30-4</strain>
    </source>
</reference>
<accession>D0N381</accession>
<gene>
    <name type="ORF">PITG_05601</name>
</gene>
<dbReference type="EMBL" id="DS028124">
    <property type="protein sequence ID" value="EEY69373.1"/>
    <property type="molecule type" value="Genomic_DNA"/>
</dbReference>
<dbReference type="RefSeq" id="XP_002999227.1">
    <property type="nucleotide sequence ID" value="XM_002999181.1"/>
</dbReference>
<dbReference type="STRING" id="403677.D0N381"/>
<dbReference type="EnsemblProtists" id="PITG_05601T0">
    <property type="protein sequence ID" value="PITG_05601T0"/>
    <property type="gene ID" value="PITG_05601"/>
</dbReference>
<dbReference type="GeneID" id="9475322"/>
<dbReference type="KEGG" id="pif:PITG_05601"/>
<dbReference type="VEuPathDB" id="FungiDB:PITG_05601"/>
<dbReference type="eggNOG" id="KOG4020">
    <property type="taxonomic scope" value="Eukaryota"/>
</dbReference>
<dbReference type="HOGENOM" id="CLU_064393_1_1_1"/>
<dbReference type="InParanoid" id="D0N381"/>
<dbReference type="OMA" id="GCGNCYK"/>
<dbReference type="OrthoDB" id="311633at2759"/>
<dbReference type="Proteomes" id="UP000006643">
    <property type="component" value="Partially assembled WGS sequence"/>
</dbReference>
<dbReference type="GO" id="GO:0005758">
    <property type="term" value="C:mitochondrial intermembrane space"/>
    <property type="evidence" value="ECO:0007669"/>
    <property type="project" value="UniProtKB-SubCell"/>
</dbReference>
<dbReference type="GO" id="GO:0051537">
    <property type="term" value="F:2 iron, 2 sulfur cluster binding"/>
    <property type="evidence" value="ECO:0007669"/>
    <property type="project" value="UniProtKB-UniRule"/>
</dbReference>
<dbReference type="GO" id="GO:0051539">
    <property type="term" value="F:4 iron, 4 sulfur cluster binding"/>
    <property type="evidence" value="ECO:0007669"/>
    <property type="project" value="UniProtKB-KW"/>
</dbReference>
<dbReference type="GO" id="GO:0009055">
    <property type="term" value="F:electron transfer activity"/>
    <property type="evidence" value="ECO:0007669"/>
    <property type="project" value="UniProtKB-UniRule"/>
</dbReference>
<dbReference type="GO" id="GO:0046872">
    <property type="term" value="F:metal ion binding"/>
    <property type="evidence" value="ECO:0007669"/>
    <property type="project" value="UniProtKB-KW"/>
</dbReference>
<dbReference type="GO" id="GO:0016226">
    <property type="term" value="P:iron-sulfur cluster assembly"/>
    <property type="evidence" value="ECO:0007669"/>
    <property type="project" value="UniProtKB-UniRule"/>
</dbReference>
<dbReference type="HAMAP" id="MF_03115">
    <property type="entry name" value="Anamorsin"/>
    <property type="match status" value="1"/>
</dbReference>
<dbReference type="InterPro" id="IPR007785">
    <property type="entry name" value="Anamorsin"/>
</dbReference>
<dbReference type="InterPro" id="IPR046408">
    <property type="entry name" value="CIAPIN1"/>
</dbReference>
<dbReference type="PANTHER" id="PTHR13273">
    <property type="entry name" value="ANAMORSIN"/>
    <property type="match status" value="1"/>
</dbReference>
<dbReference type="PANTHER" id="PTHR13273:SF14">
    <property type="entry name" value="ANAMORSIN"/>
    <property type="match status" value="1"/>
</dbReference>
<dbReference type="Pfam" id="PF05093">
    <property type="entry name" value="CIAPIN1"/>
    <property type="match status" value="1"/>
</dbReference>
<organism>
    <name type="scientific">Phytophthora infestans (strain T30-4)</name>
    <name type="common">Potato late blight agent</name>
    <dbReference type="NCBI Taxonomy" id="403677"/>
    <lineage>
        <taxon>Eukaryota</taxon>
        <taxon>Sar</taxon>
        <taxon>Stramenopiles</taxon>
        <taxon>Oomycota</taxon>
        <taxon>Peronosporales</taxon>
        <taxon>Peronosporaceae</taxon>
        <taxon>Phytophthora</taxon>
    </lineage>
</organism>
<comment type="function">
    <text evidence="1">Component of the cytosolic iron-sulfur (Fe-S) protein assembly (CIA) machinery. Required for the maturation of extramitochondrial Fe-S proteins. Part of an electron transfer chain functioning in an early step of cytosolic Fe-S biogenesis, facilitating the de novo assembly of a [4Fe-4S] cluster on the cytosolic Fe-S scaffold complex. Electrons are transferred from NADPH via a FAD- and FMN-containing diflavin oxidoreductase. Together with the diflavin oxidoreductase, also required for the assembly of the diferric tyrosyl radical cofactor of ribonucleotide reductase (RNR), probably by providing electrons for reduction during radical cofactor maturation in the catalytic small subunit.</text>
</comment>
<comment type="cofactor">
    <cofactor evidence="1">
        <name>[2Fe-2S] cluster</name>
        <dbReference type="ChEBI" id="CHEBI:190135"/>
    </cofactor>
</comment>
<comment type="cofactor">
    <cofactor evidence="1">
        <name>[4Fe-4S] cluster</name>
        <dbReference type="ChEBI" id="CHEBI:49883"/>
    </cofactor>
</comment>
<comment type="subunit">
    <text evidence="1">Monomer.</text>
</comment>
<comment type="subcellular location">
    <subcellularLocation>
        <location evidence="1">Cytoplasm</location>
    </subcellularLocation>
    <subcellularLocation>
        <location evidence="1">Mitochondrion intermembrane space</location>
    </subcellularLocation>
</comment>
<comment type="domain">
    <text evidence="1">The C-terminal domain binds 2 Fe-S clusters but is otherwise mostly in an intrinsically disordered conformation.</text>
</comment>
<comment type="domain">
    <text evidence="1">The N-terminal domain has structural similarity with S-adenosyl-L-methionine-dependent methyltransferases, but does not bind S-adenosyl-L-methionine. It is required for correct assembly of the 2 Fe-S clusters.</text>
</comment>
<comment type="domain">
    <text evidence="1">The twin Cx2C motifs are involved in the recognition by the mitochondrial MIA40-ERV1 disulfide relay system. The formation of 2 disulfide bonds in the Cx2C motifs through dithiol/disulfide exchange reactions effectively traps the protein in the mitochondrial intermembrane space.</text>
</comment>
<comment type="similarity">
    <text evidence="1">Belongs to the anamorsin family.</text>
</comment>